<accession>P0C900</accession>
<accession>B7MP74</accession>
<accession>Q9AME1</accession>
<dbReference type="EMBL" id="CU928162">
    <property type="protein sequence ID" value="CAR06546.1"/>
    <property type="molecule type" value="Genomic_DNA"/>
</dbReference>
<dbReference type="RefSeq" id="WP_000730982.1">
    <property type="nucleotide sequence ID" value="NC_011745.1"/>
</dbReference>
<dbReference type="SMR" id="P0C900"/>
<dbReference type="KEGG" id="ecq:ECED1_0335"/>
<dbReference type="HOGENOM" id="CLU_120328_0_0_6"/>
<dbReference type="Proteomes" id="UP000000748">
    <property type="component" value="Chromosome"/>
</dbReference>
<dbReference type="GO" id="GO:0009289">
    <property type="term" value="C:pilus"/>
    <property type="evidence" value="ECO:0007669"/>
    <property type="project" value="UniProtKB-SubCell"/>
</dbReference>
<dbReference type="Gene3D" id="2.60.40.3290">
    <property type="entry name" value="Fimbrial protein EcpA"/>
    <property type="match status" value="1"/>
</dbReference>
<dbReference type="InterPro" id="IPR016514">
    <property type="entry name" value="EcpA"/>
</dbReference>
<dbReference type="InterPro" id="IPR038478">
    <property type="entry name" value="Fimbrillin_EcpA_sf"/>
</dbReference>
<dbReference type="Pfam" id="PF16449">
    <property type="entry name" value="MatB"/>
    <property type="match status" value="1"/>
</dbReference>
<dbReference type="PIRSF" id="PIRSF007320">
    <property type="entry name" value="Fimbrillin_MatB"/>
    <property type="match status" value="1"/>
</dbReference>
<proteinExistence type="inferred from homology"/>
<comment type="function">
    <text evidence="1">Part of the ecpRABCDE operon, which encodes the E.coli common pilus (ECP). ECP is found in both commensal and pathogenic strains and plays a dual role in early-stage biofilm development and host cell recognition. Major subunit of the fimbria (By similarity).</text>
</comment>
<comment type="subunit">
    <text evidence="1">Self-associates. Forms filaments. Interacts with EcpD (By similarity).</text>
</comment>
<comment type="subcellular location">
    <subcellularLocation>
        <location evidence="1">Fimbrium</location>
    </subcellularLocation>
</comment>
<comment type="induction">
    <text evidence="1">Negatively regulated by H-NS. Positively regulated by IHF and EcpR (By similarity).</text>
</comment>
<comment type="similarity">
    <text evidence="3">Belongs to the EcpA/MatB fimbrillin family.</text>
</comment>
<sequence length="195" mass="20081">MKKKVLAIALVTVFTGTGVAQAADVTAQAVATWSATAKKDTTSKLVVTPLGSLAFQYAEGIKGFNSQKGLFDVAIEGDSTATAFKLTSRLITNTLTQLDTSGSTLNVGVDYNGAAVEKTGDTVMIDTANGVLGGNLSPLANGYNASNRTTAQDGFTFSIISGTTNGTTAVTDYSTLPEGIWSGDVSVQFDATWTS</sequence>
<organism>
    <name type="scientific">Escherichia coli O81 (strain ED1a)</name>
    <dbReference type="NCBI Taxonomy" id="585397"/>
    <lineage>
        <taxon>Bacteria</taxon>
        <taxon>Pseudomonadati</taxon>
        <taxon>Pseudomonadota</taxon>
        <taxon>Gammaproteobacteria</taxon>
        <taxon>Enterobacterales</taxon>
        <taxon>Enterobacteriaceae</taxon>
        <taxon>Escherichia</taxon>
    </lineage>
</organism>
<feature type="signal peptide" evidence="2">
    <location>
        <begin position="1"/>
        <end position="22"/>
    </location>
</feature>
<feature type="chain" id="PRO_0000367931" description="Common pilus major fimbrillin subunit EcpA">
    <location>
        <begin position="23"/>
        <end position="195"/>
    </location>
</feature>
<gene>
    <name type="primary">ecpA</name>
    <name type="synonym">matB</name>
    <name type="ordered locus">ECED1_0335</name>
</gene>
<evidence type="ECO:0000250" key="1"/>
<evidence type="ECO:0000255" key="2"/>
<evidence type="ECO:0000305" key="3"/>
<protein>
    <recommendedName>
        <fullName>Common pilus major fimbrillin subunit EcpA</fullName>
    </recommendedName>
    <alternativeName>
        <fullName>MatB fimbrillin</fullName>
    </alternativeName>
</protein>
<name>ECPA_ECO81</name>
<keyword id="KW-0281">Fimbrium</keyword>
<keyword id="KW-0732">Signal</keyword>
<reference key="1">
    <citation type="journal article" date="2009" name="PLoS Genet.">
        <title>Organised genome dynamics in the Escherichia coli species results in highly diverse adaptive paths.</title>
        <authorList>
            <person name="Touchon M."/>
            <person name="Hoede C."/>
            <person name="Tenaillon O."/>
            <person name="Barbe V."/>
            <person name="Baeriswyl S."/>
            <person name="Bidet P."/>
            <person name="Bingen E."/>
            <person name="Bonacorsi S."/>
            <person name="Bouchier C."/>
            <person name="Bouvet O."/>
            <person name="Calteau A."/>
            <person name="Chiapello H."/>
            <person name="Clermont O."/>
            <person name="Cruveiller S."/>
            <person name="Danchin A."/>
            <person name="Diard M."/>
            <person name="Dossat C."/>
            <person name="Karoui M.E."/>
            <person name="Frapy E."/>
            <person name="Garry L."/>
            <person name="Ghigo J.M."/>
            <person name="Gilles A.M."/>
            <person name="Johnson J."/>
            <person name="Le Bouguenec C."/>
            <person name="Lescat M."/>
            <person name="Mangenot S."/>
            <person name="Martinez-Jehanne V."/>
            <person name="Matic I."/>
            <person name="Nassif X."/>
            <person name="Oztas S."/>
            <person name="Petit M.A."/>
            <person name="Pichon C."/>
            <person name="Rouy Z."/>
            <person name="Ruf C.S."/>
            <person name="Schneider D."/>
            <person name="Tourret J."/>
            <person name="Vacherie B."/>
            <person name="Vallenet D."/>
            <person name="Medigue C."/>
            <person name="Rocha E.P.C."/>
            <person name="Denamur E."/>
        </authorList>
    </citation>
    <scope>NUCLEOTIDE SEQUENCE [LARGE SCALE GENOMIC DNA]</scope>
    <source>
        <strain>ED1a</strain>
    </source>
</reference>